<reference key="1">
    <citation type="submission" date="2000-03" db="EMBL/GenBank/DDBJ databases">
        <authorList>
            <person name="Baikalov C.J."/>
            <person name="Slupska M.M."/>
            <person name="Miller J.H."/>
        </authorList>
    </citation>
    <scope>NUCLEOTIDE SEQUENCE [GENOMIC DNA]</scope>
    <source>
        <strain>ATCC 51768 / DSM 7523 / JCM 9630 / CIP 104966 / NBRC 100827 / IM2</strain>
    </source>
</reference>
<reference key="2">
    <citation type="journal article" date="2002" name="Proc. Natl. Acad. Sci. U.S.A.">
        <title>Genome sequence of the hyperthermophilic crenarchaeon Pyrobaculum aerophilum.</title>
        <authorList>
            <person name="Fitz-Gibbon S.T."/>
            <person name="Ladner H."/>
            <person name="Kim U.-J."/>
            <person name="Stetter K.O."/>
            <person name="Simon M.I."/>
            <person name="Miller J.H."/>
        </authorList>
    </citation>
    <scope>NUCLEOTIDE SEQUENCE [LARGE SCALE GENOMIC DNA]</scope>
    <source>
        <strain>ATCC 51768 / DSM 7523 / JCM 9630 / CIP 104966 / NBRC 100827 / IM2</strain>
    </source>
</reference>
<reference key="3">
    <citation type="journal article" date="2003" name="Acta Crystallogr. D">
        <title>Structure of superoxide dismutase from Pyrobaculum aerophilum presents a challenging case in molecular replacement with multiple molecules, pseudo-symmetry and twinning.</title>
        <authorList>
            <person name="Lee S."/>
            <person name="Sawaya M.R."/>
            <person name="Eisenberg D."/>
        </authorList>
    </citation>
    <scope>X-RAY CRYSTALLOGRAPHY (1.8 ANGSTROMS) OF 2-211</scope>
    <scope>SUBUNIT</scope>
</reference>
<gene>
    <name type="primary">sod</name>
    <name type="ordered locus">PAE0274</name>
</gene>
<sequence length="211" mass="24204">MVTTKRYTLPPLPYAYNALEPYISAEIMQLHHQKHHQGYVNGANAALEKLEKFRKGEAQIDIRAVLRDLSFHLNGHILHSIFWPNMAPPGKGGGKPGGKIADLINKFFGSFEKFKEEFSQAAKNVEGVGWAILVYEPLEEQLLILQIEKHNLMHAADAQVLLALDVWEHAYYLQYKNDRGSYVDNWWNVVNWDDVERRLQKALNGQIALKL</sequence>
<proteinExistence type="evidence at protein level"/>
<comment type="function">
    <text>Destroys superoxide anion radicals which are normally produced within the cells and which are toxic to biological systems.</text>
</comment>
<comment type="catalytic activity">
    <reaction>
        <text>2 superoxide + 2 H(+) = H2O2 + O2</text>
        <dbReference type="Rhea" id="RHEA:20696"/>
        <dbReference type="ChEBI" id="CHEBI:15378"/>
        <dbReference type="ChEBI" id="CHEBI:15379"/>
        <dbReference type="ChEBI" id="CHEBI:16240"/>
        <dbReference type="ChEBI" id="CHEBI:18421"/>
        <dbReference type="EC" id="1.15.1.1"/>
    </reaction>
</comment>
<comment type="cofactor">
    <cofactor evidence="1">
        <name>Fe cation</name>
        <dbReference type="ChEBI" id="CHEBI:24875"/>
    </cofactor>
    <text evidence="1">Binds 1 Fe cation per subunit.</text>
</comment>
<comment type="subunit">
    <text evidence="2">Homotetramer.</text>
</comment>
<comment type="similarity">
    <text evidence="3">Belongs to the iron/manganese superoxide dismutase family.</text>
</comment>
<organism>
    <name type="scientific">Pyrobaculum aerophilum (strain ATCC 51768 / DSM 7523 / JCM 9630 / CIP 104966 / NBRC 100827 / IM2)</name>
    <dbReference type="NCBI Taxonomy" id="178306"/>
    <lineage>
        <taxon>Archaea</taxon>
        <taxon>Thermoproteota</taxon>
        <taxon>Thermoprotei</taxon>
        <taxon>Thermoproteales</taxon>
        <taxon>Thermoproteaceae</taxon>
        <taxon>Pyrobaculum</taxon>
    </lineage>
</organism>
<feature type="chain" id="PRO_0000160008" description="Superoxide dismutase [Fe]">
    <location>
        <begin position="1"/>
        <end position="211"/>
    </location>
</feature>
<feature type="binding site" evidence="1">
    <location>
        <position position="31"/>
    </location>
    <ligand>
        <name>Fe cation</name>
        <dbReference type="ChEBI" id="CHEBI:24875"/>
    </ligand>
</feature>
<feature type="binding site" evidence="1">
    <location>
        <position position="79"/>
    </location>
    <ligand>
        <name>Fe cation</name>
        <dbReference type="ChEBI" id="CHEBI:24875"/>
    </ligand>
</feature>
<feature type="binding site" evidence="1">
    <location>
        <position position="165"/>
    </location>
    <ligand>
        <name>Fe cation</name>
        <dbReference type="ChEBI" id="CHEBI:24875"/>
    </ligand>
</feature>
<feature type="binding site" evidence="1">
    <location>
        <position position="169"/>
    </location>
    <ligand>
        <name>Fe cation</name>
        <dbReference type="ChEBI" id="CHEBI:24875"/>
    </ligand>
</feature>
<feature type="turn" evidence="4">
    <location>
        <begin position="16"/>
        <end position="22"/>
    </location>
</feature>
<feature type="helix" evidence="4">
    <location>
        <begin position="25"/>
        <end position="33"/>
    </location>
</feature>
<feature type="helix" evidence="4">
    <location>
        <begin position="35"/>
        <end position="54"/>
    </location>
</feature>
<feature type="helix" evidence="4">
    <location>
        <begin position="62"/>
        <end position="82"/>
    </location>
</feature>
<feature type="turn" evidence="4">
    <location>
        <begin position="83"/>
        <end position="85"/>
    </location>
</feature>
<feature type="strand" evidence="4">
    <location>
        <begin position="92"/>
        <end position="94"/>
    </location>
</feature>
<feature type="helix" evidence="4">
    <location>
        <begin position="98"/>
        <end position="108"/>
    </location>
</feature>
<feature type="helix" evidence="4">
    <location>
        <begin position="111"/>
        <end position="123"/>
    </location>
</feature>
<feature type="strand" evidence="4">
    <location>
        <begin position="126"/>
        <end position="136"/>
    </location>
</feature>
<feature type="turn" evidence="4">
    <location>
        <begin position="137"/>
        <end position="140"/>
    </location>
</feature>
<feature type="strand" evidence="4">
    <location>
        <begin position="141"/>
        <end position="148"/>
    </location>
</feature>
<feature type="turn" evidence="4">
    <location>
        <begin position="149"/>
        <end position="151"/>
    </location>
</feature>
<feature type="strand" evidence="4">
    <location>
        <begin position="159"/>
        <end position="165"/>
    </location>
</feature>
<feature type="helix" evidence="4">
    <location>
        <begin position="168"/>
        <end position="170"/>
    </location>
</feature>
<feature type="helix" evidence="4">
    <location>
        <begin position="172"/>
        <end position="175"/>
    </location>
</feature>
<feature type="helix" evidence="4">
    <location>
        <begin position="179"/>
        <end position="186"/>
    </location>
</feature>
<feature type="helix" evidence="4">
    <location>
        <begin position="187"/>
        <end position="189"/>
    </location>
</feature>
<feature type="helix" evidence="4">
    <location>
        <begin position="192"/>
        <end position="203"/>
    </location>
</feature>
<accession>O93724</accession>
<protein>
    <recommendedName>
        <fullName>Superoxide dismutase [Fe]</fullName>
        <ecNumber>1.15.1.1</ecNumber>
    </recommendedName>
</protein>
<name>SODF_PYRAE</name>
<dbReference type="EC" id="1.15.1.1"/>
<dbReference type="EMBL" id="U82371">
    <property type="protein sequence ID" value="AAD00533.2"/>
    <property type="molecule type" value="Genomic_DNA"/>
</dbReference>
<dbReference type="EMBL" id="AE009441">
    <property type="protein sequence ID" value="AAL62675.1"/>
    <property type="molecule type" value="Genomic_DNA"/>
</dbReference>
<dbReference type="RefSeq" id="WP_011007147.1">
    <property type="nucleotide sequence ID" value="NC_003364.1"/>
</dbReference>
<dbReference type="PDB" id="1P7G">
    <property type="method" value="X-ray"/>
    <property type="resolution" value="1.80 A"/>
    <property type="chains" value="A/B/C/D/E/F/G/H/I/J/K/L/M/N/O/P/Q/R/S/T/U/V/W/X=2-211"/>
</dbReference>
<dbReference type="PDB" id="3EVK">
    <property type="method" value="X-ray"/>
    <property type="resolution" value="1.85 A"/>
    <property type="chains" value="A/B/C/D=2-211"/>
</dbReference>
<dbReference type="PDBsum" id="1P7G"/>
<dbReference type="PDBsum" id="3EVK"/>
<dbReference type="SMR" id="O93724"/>
<dbReference type="FunCoup" id="O93724">
    <property type="interactions" value="98"/>
</dbReference>
<dbReference type="STRING" id="178306.PAE0274"/>
<dbReference type="EnsemblBacteria" id="AAL62675">
    <property type="protein sequence ID" value="AAL62675"/>
    <property type="gene ID" value="PAE0274"/>
</dbReference>
<dbReference type="GeneID" id="1464893"/>
<dbReference type="KEGG" id="pai:PAE0274"/>
<dbReference type="PATRIC" id="fig|178306.9.peg.201"/>
<dbReference type="eggNOG" id="arCOG04147">
    <property type="taxonomic scope" value="Archaea"/>
</dbReference>
<dbReference type="HOGENOM" id="CLU_031625_2_2_2"/>
<dbReference type="InParanoid" id="O93724"/>
<dbReference type="BRENDA" id="1.15.1.1">
    <property type="organism ID" value="5239"/>
</dbReference>
<dbReference type="EvolutionaryTrace" id="O93724"/>
<dbReference type="Proteomes" id="UP000002439">
    <property type="component" value="Chromosome"/>
</dbReference>
<dbReference type="GO" id="GO:0046872">
    <property type="term" value="F:metal ion binding"/>
    <property type="evidence" value="ECO:0007669"/>
    <property type="project" value="UniProtKB-KW"/>
</dbReference>
<dbReference type="GO" id="GO:0004784">
    <property type="term" value="F:superoxide dismutase activity"/>
    <property type="evidence" value="ECO:0007669"/>
    <property type="project" value="UniProtKB-EC"/>
</dbReference>
<dbReference type="FunFam" id="1.10.287.990:FF:000001">
    <property type="entry name" value="Superoxide dismutase"/>
    <property type="match status" value="1"/>
</dbReference>
<dbReference type="FunFam" id="3.55.40.20:FF:000004">
    <property type="entry name" value="Superoxide dismutase [Fe]"/>
    <property type="match status" value="1"/>
</dbReference>
<dbReference type="Gene3D" id="1.10.287.990">
    <property type="entry name" value="Fe,Mn superoxide dismutase (SOD) domain"/>
    <property type="match status" value="1"/>
</dbReference>
<dbReference type="Gene3D" id="3.55.40.20">
    <property type="entry name" value="Iron/manganese superoxide dismutase, C-terminal domain"/>
    <property type="match status" value="1"/>
</dbReference>
<dbReference type="InterPro" id="IPR050265">
    <property type="entry name" value="Fe/Mn_Superoxide_Dismutase"/>
</dbReference>
<dbReference type="InterPro" id="IPR001189">
    <property type="entry name" value="Mn/Fe_SOD"/>
</dbReference>
<dbReference type="InterPro" id="IPR019833">
    <property type="entry name" value="Mn/Fe_SOD_BS"/>
</dbReference>
<dbReference type="InterPro" id="IPR019832">
    <property type="entry name" value="Mn/Fe_SOD_C"/>
</dbReference>
<dbReference type="InterPro" id="IPR019831">
    <property type="entry name" value="Mn/Fe_SOD_N"/>
</dbReference>
<dbReference type="InterPro" id="IPR036324">
    <property type="entry name" value="Mn/Fe_SOD_N_sf"/>
</dbReference>
<dbReference type="InterPro" id="IPR036314">
    <property type="entry name" value="SOD_C_sf"/>
</dbReference>
<dbReference type="PANTHER" id="PTHR11404">
    <property type="entry name" value="SUPEROXIDE DISMUTASE 2"/>
    <property type="match status" value="1"/>
</dbReference>
<dbReference type="PANTHER" id="PTHR11404:SF6">
    <property type="entry name" value="SUPEROXIDE DISMUTASE [MN], MITOCHONDRIAL"/>
    <property type="match status" value="1"/>
</dbReference>
<dbReference type="Pfam" id="PF02777">
    <property type="entry name" value="Sod_Fe_C"/>
    <property type="match status" value="1"/>
</dbReference>
<dbReference type="Pfam" id="PF00081">
    <property type="entry name" value="Sod_Fe_N"/>
    <property type="match status" value="1"/>
</dbReference>
<dbReference type="PIRSF" id="PIRSF000349">
    <property type="entry name" value="SODismutase"/>
    <property type="match status" value="1"/>
</dbReference>
<dbReference type="PRINTS" id="PR01703">
    <property type="entry name" value="MNSODISMTASE"/>
</dbReference>
<dbReference type="SUPFAM" id="SSF54719">
    <property type="entry name" value="Fe,Mn superoxide dismutase (SOD), C-terminal domain"/>
    <property type="match status" value="1"/>
</dbReference>
<dbReference type="SUPFAM" id="SSF46609">
    <property type="entry name" value="Fe,Mn superoxide dismutase (SOD), N-terminal domain"/>
    <property type="match status" value="1"/>
</dbReference>
<dbReference type="PROSITE" id="PS00088">
    <property type="entry name" value="SOD_MN"/>
    <property type="match status" value="1"/>
</dbReference>
<evidence type="ECO:0000250" key="1"/>
<evidence type="ECO:0000269" key="2">
    <source>
    </source>
</evidence>
<evidence type="ECO:0000305" key="3"/>
<evidence type="ECO:0007829" key="4">
    <source>
        <dbReference type="PDB" id="1P7G"/>
    </source>
</evidence>
<keyword id="KW-0002">3D-structure</keyword>
<keyword id="KW-0408">Iron</keyword>
<keyword id="KW-0479">Metal-binding</keyword>
<keyword id="KW-0560">Oxidoreductase</keyword>
<keyword id="KW-1185">Reference proteome</keyword>